<reference key="1">
    <citation type="submission" date="2007-07" db="EMBL/GenBank/DDBJ databases">
        <title>Complete genome sequence of Campylobacter jejuni subsp doylei 269.97 isolated from human blood.</title>
        <authorList>
            <person name="Fouts D.E."/>
            <person name="Mongodin E.F."/>
            <person name="Puiu D."/>
            <person name="Sebastian Y."/>
            <person name="Miller W.G."/>
            <person name="Mandrell R.E."/>
            <person name="Lastovica A.J."/>
            <person name="Nelson K.E."/>
        </authorList>
    </citation>
    <scope>NUCLEOTIDE SEQUENCE [LARGE SCALE GENOMIC DNA]</scope>
    <source>
        <strain>ATCC BAA-1458 / RM4099 / 269.97</strain>
    </source>
</reference>
<organism>
    <name type="scientific">Campylobacter jejuni subsp. doylei (strain ATCC BAA-1458 / RM4099 / 269.97)</name>
    <dbReference type="NCBI Taxonomy" id="360109"/>
    <lineage>
        <taxon>Bacteria</taxon>
        <taxon>Pseudomonadati</taxon>
        <taxon>Campylobacterota</taxon>
        <taxon>Epsilonproteobacteria</taxon>
        <taxon>Campylobacterales</taxon>
        <taxon>Campylobacteraceae</taxon>
        <taxon>Campylobacter</taxon>
    </lineage>
</organism>
<feature type="chain" id="PRO_0000362266" description="ATP synthase subunit a">
    <location>
        <begin position="1"/>
        <end position="226"/>
    </location>
</feature>
<feature type="transmembrane region" description="Helical" evidence="1">
    <location>
        <begin position="17"/>
        <end position="37"/>
    </location>
</feature>
<feature type="transmembrane region" description="Helical" evidence="1">
    <location>
        <begin position="79"/>
        <end position="99"/>
    </location>
</feature>
<feature type="transmembrane region" description="Helical" evidence="1">
    <location>
        <begin position="105"/>
        <end position="125"/>
    </location>
</feature>
<feature type="transmembrane region" description="Helical" evidence="1">
    <location>
        <begin position="134"/>
        <end position="154"/>
    </location>
</feature>
<feature type="transmembrane region" description="Helical" evidence="1">
    <location>
        <begin position="176"/>
        <end position="196"/>
    </location>
</feature>
<feature type="transmembrane region" description="Helical" evidence="1">
    <location>
        <begin position="199"/>
        <end position="219"/>
    </location>
</feature>
<evidence type="ECO:0000255" key="1">
    <source>
        <dbReference type="HAMAP-Rule" id="MF_01393"/>
    </source>
</evidence>
<sequence length="226" mass="25068">MKDLFLFSSLLDASHTFSYFFHIGLVALIAVIVAMMATRSMQLVPRGMQNLAEAFLEGVLSMGRDTMGSEKGVRKYLPLVATLGIIVFFSNIIGILPGFHAPTASLNLTLSLAIIVFVYYHFEGIRAQGFIKYFAHFMGPIKLLAPLMFPIEIVSHLSRVVSLSFRLFGNIKGDDLFLMVILALVPYIAPLPAYVLLTFMAFLQAFIFMILTYVYLAGATVVEKGH</sequence>
<gene>
    <name evidence="1" type="primary">atpB</name>
    <name type="ordered locus">JJD26997_0526</name>
</gene>
<proteinExistence type="inferred from homology"/>
<keyword id="KW-0066">ATP synthesis</keyword>
<keyword id="KW-0997">Cell inner membrane</keyword>
<keyword id="KW-1003">Cell membrane</keyword>
<keyword id="KW-0138">CF(0)</keyword>
<keyword id="KW-0375">Hydrogen ion transport</keyword>
<keyword id="KW-0406">Ion transport</keyword>
<keyword id="KW-0472">Membrane</keyword>
<keyword id="KW-0812">Transmembrane</keyword>
<keyword id="KW-1133">Transmembrane helix</keyword>
<keyword id="KW-0813">Transport</keyword>
<name>ATP6_CAMJD</name>
<protein>
    <recommendedName>
        <fullName evidence="1">ATP synthase subunit a</fullName>
    </recommendedName>
    <alternativeName>
        <fullName evidence="1">ATP synthase F0 sector subunit a</fullName>
    </alternativeName>
    <alternativeName>
        <fullName evidence="1">F-ATPase subunit 6</fullName>
    </alternativeName>
</protein>
<dbReference type="EMBL" id="CP000768">
    <property type="protein sequence ID" value="ABS44513.1"/>
    <property type="molecule type" value="Genomic_DNA"/>
</dbReference>
<dbReference type="SMR" id="A7H2H4"/>
<dbReference type="KEGG" id="cjd:JJD26997_0526"/>
<dbReference type="HOGENOM" id="CLU_041018_2_2_7"/>
<dbReference type="Proteomes" id="UP000002302">
    <property type="component" value="Chromosome"/>
</dbReference>
<dbReference type="GO" id="GO:0005886">
    <property type="term" value="C:plasma membrane"/>
    <property type="evidence" value="ECO:0007669"/>
    <property type="project" value="UniProtKB-SubCell"/>
</dbReference>
<dbReference type="GO" id="GO:0045259">
    <property type="term" value="C:proton-transporting ATP synthase complex"/>
    <property type="evidence" value="ECO:0007669"/>
    <property type="project" value="UniProtKB-KW"/>
</dbReference>
<dbReference type="GO" id="GO:0046933">
    <property type="term" value="F:proton-transporting ATP synthase activity, rotational mechanism"/>
    <property type="evidence" value="ECO:0007669"/>
    <property type="project" value="UniProtKB-UniRule"/>
</dbReference>
<dbReference type="GO" id="GO:0042777">
    <property type="term" value="P:proton motive force-driven plasma membrane ATP synthesis"/>
    <property type="evidence" value="ECO:0007669"/>
    <property type="project" value="TreeGrafter"/>
</dbReference>
<dbReference type="CDD" id="cd00310">
    <property type="entry name" value="ATP-synt_Fo_a_6"/>
    <property type="match status" value="1"/>
</dbReference>
<dbReference type="FunFam" id="1.20.120.220:FF:000006">
    <property type="entry name" value="ATP synthase subunit a"/>
    <property type="match status" value="1"/>
</dbReference>
<dbReference type="Gene3D" id="1.20.120.220">
    <property type="entry name" value="ATP synthase, F0 complex, subunit A"/>
    <property type="match status" value="1"/>
</dbReference>
<dbReference type="HAMAP" id="MF_01393">
    <property type="entry name" value="ATP_synth_a_bact"/>
    <property type="match status" value="1"/>
</dbReference>
<dbReference type="InterPro" id="IPR045082">
    <property type="entry name" value="ATP_syn_F0_a_bact/chloroplast"/>
</dbReference>
<dbReference type="InterPro" id="IPR000568">
    <property type="entry name" value="ATP_synth_F0_asu"/>
</dbReference>
<dbReference type="InterPro" id="IPR023011">
    <property type="entry name" value="ATP_synth_F0_asu_AS"/>
</dbReference>
<dbReference type="InterPro" id="IPR035908">
    <property type="entry name" value="F0_ATP_A_sf"/>
</dbReference>
<dbReference type="NCBIfam" id="TIGR01131">
    <property type="entry name" value="ATP_synt_6_or_A"/>
    <property type="match status" value="1"/>
</dbReference>
<dbReference type="NCBIfam" id="NF004481">
    <property type="entry name" value="PRK05815.2-3"/>
    <property type="match status" value="1"/>
</dbReference>
<dbReference type="PANTHER" id="PTHR42823">
    <property type="entry name" value="ATP SYNTHASE SUBUNIT A, CHLOROPLASTIC"/>
    <property type="match status" value="1"/>
</dbReference>
<dbReference type="PANTHER" id="PTHR42823:SF3">
    <property type="entry name" value="ATP SYNTHASE SUBUNIT A, CHLOROPLASTIC"/>
    <property type="match status" value="1"/>
</dbReference>
<dbReference type="Pfam" id="PF00119">
    <property type="entry name" value="ATP-synt_A"/>
    <property type="match status" value="1"/>
</dbReference>
<dbReference type="PRINTS" id="PR00123">
    <property type="entry name" value="ATPASEA"/>
</dbReference>
<dbReference type="SUPFAM" id="SSF81336">
    <property type="entry name" value="F1F0 ATP synthase subunit A"/>
    <property type="match status" value="1"/>
</dbReference>
<dbReference type="PROSITE" id="PS00449">
    <property type="entry name" value="ATPASE_A"/>
    <property type="match status" value="1"/>
</dbReference>
<accession>A7H2H4</accession>
<comment type="function">
    <text evidence="1">Key component of the proton channel; it plays a direct role in the translocation of protons across the membrane.</text>
</comment>
<comment type="subunit">
    <text evidence="1">F-type ATPases have 2 components, CF(1) - the catalytic core - and CF(0) - the membrane proton channel. CF(1) has five subunits: alpha(3), beta(3), gamma(1), delta(1), epsilon(1). CF(0) has three main subunits: a(1), b(2) and c(9-12). The alpha and beta chains form an alternating ring which encloses part of the gamma chain. CF(1) is attached to CF(0) by a central stalk formed by the gamma and epsilon chains, while a peripheral stalk is formed by the delta and b chains.</text>
</comment>
<comment type="subcellular location">
    <subcellularLocation>
        <location evidence="1">Cell inner membrane</location>
        <topology evidence="1">Multi-pass membrane protein</topology>
    </subcellularLocation>
</comment>
<comment type="similarity">
    <text evidence="1">Belongs to the ATPase A chain family.</text>
</comment>